<organism>
    <name type="scientific">Thermoanaerobacter pseudethanolicus (strain ATCC 33223 / 39E)</name>
    <name type="common">Clostridium thermohydrosulfuricum</name>
    <dbReference type="NCBI Taxonomy" id="340099"/>
    <lineage>
        <taxon>Bacteria</taxon>
        <taxon>Bacillati</taxon>
        <taxon>Bacillota</taxon>
        <taxon>Clostridia</taxon>
        <taxon>Thermoanaerobacterales</taxon>
        <taxon>Thermoanaerobacteraceae</taxon>
        <taxon>Thermoanaerobacter</taxon>
    </lineage>
</organism>
<name>XYLA_THEP3</name>
<reference key="1">
    <citation type="journal article" date="1991" name="Agric. Biol. Chem.">
        <title>Xylose (glucose) isomerase gene from the thermophile Clostridium thermohydrosulfuricum; cloning, sequencing, and expression in Escherichia coli.</title>
        <authorList>
            <person name="Dekker K."/>
            <person name="Yamagata H."/>
            <person name="Sakaguchi K."/>
            <person name="Udaka S."/>
        </authorList>
    </citation>
    <scope>NUCLEOTIDE SEQUENCE [GENOMIC DNA]</scope>
</reference>
<reference key="2">
    <citation type="journal article" date="1998" name="J. Bacteriol.">
        <title>Cloning and characterization of transcription of the xylAB operon in Thermoanaerobacter ethanolicus.</title>
        <authorList>
            <person name="Erbeznik M."/>
            <person name="Dawson K.A."/>
            <person name="Strobel H.J."/>
        </authorList>
    </citation>
    <scope>NUCLEOTIDE SEQUENCE [GENOMIC DNA]</scope>
</reference>
<reference key="3">
    <citation type="submission" date="2008-01" db="EMBL/GenBank/DDBJ databases">
        <title>Complete sequence of Thermoanaerobacter pseudethanolicus 39E.</title>
        <authorList>
            <person name="Copeland A."/>
            <person name="Lucas S."/>
            <person name="Lapidus A."/>
            <person name="Barry K."/>
            <person name="Glavina del Rio T."/>
            <person name="Dalin E."/>
            <person name="Tice H."/>
            <person name="Pitluck S."/>
            <person name="Bruce D."/>
            <person name="Goodwin L."/>
            <person name="Saunders E."/>
            <person name="Brettin T."/>
            <person name="Detter J.C."/>
            <person name="Han C."/>
            <person name="Schmutz J."/>
            <person name="Larimer F."/>
            <person name="Land M."/>
            <person name="Hauser L."/>
            <person name="Kyrpides N."/>
            <person name="Lykidis A."/>
            <person name="Hemme C."/>
            <person name="Fields M.W."/>
            <person name="He Z."/>
            <person name="Zhou J."/>
            <person name="Richardson P."/>
        </authorList>
    </citation>
    <scope>NUCLEOTIDE SEQUENCE [LARGE SCALE GENOMIC DNA]</scope>
    <source>
        <strain>ATCC 33223 / DSM 2355 / 39E</strain>
    </source>
</reference>
<gene>
    <name type="primary">xylA</name>
    <name type="ordered locus">Teth39_2060</name>
</gene>
<feature type="chain" id="PRO_0000195812" description="Xylose isomerase">
    <location>
        <begin position="1"/>
        <end position="438"/>
    </location>
</feature>
<feature type="active site" evidence="1">
    <location>
        <position position="100"/>
    </location>
</feature>
<feature type="active site" evidence="1">
    <location>
        <position position="103"/>
    </location>
</feature>
<feature type="binding site" evidence="1">
    <location>
        <position position="231"/>
    </location>
    <ligand>
        <name>Mg(2+)</name>
        <dbReference type="ChEBI" id="CHEBI:18420"/>
        <label>1</label>
    </ligand>
</feature>
<feature type="binding site" evidence="1">
    <location>
        <position position="267"/>
    </location>
    <ligand>
        <name>Mg(2+)</name>
        <dbReference type="ChEBI" id="CHEBI:18420"/>
        <label>1</label>
    </ligand>
</feature>
<feature type="binding site" evidence="1">
    <location>
        <position position="267"/>
    </location>
    <ligand>
        <name>Mg(2+)</name>
        <dbReference type="ChEBI" id="CHEBI:18420"/>
        <label>2</label>
    </ligand>
</feature>
<feature type="binding site" evidence="1">
    <location>
        <position position="270"/>
    </location>
    <ligand>
        <name>Mg(2+)</name>
        <dbReference type="ChEBI" id="CHEBI:18420"/>
        <label>2</label>
    </ligand>
</feature>
<feature type="binding site" evidence="1">
    <location>
        <position position="295"/>
    </location>
    <ligand>
        <name>Mg(2+)</name>
        <dbReference type="ChEBI" id="CHEBI:18420"/>
        <label>1</label>
    </ligand>
</feature>
<feature type="binding site" evidence="1">
    <location>
        <position position="306"/>
    </location>
    <ligand>
        <name>Mg(2+)</name>
        <dbReference type="ChEBI" id="CHEBI:18420"/>
        <label>2</label>
    </ligand>
</feature>
<feature type="binding site" evidence="1">
    <location>
        <position position="308"/>
    </location>
    <ligand>
        <name>Mg(2+)</name>
        <dbReference type="ChEBI" id="CHEBI:18420"/>
        <label>2</label>
    </ligand>
</feature>
<feature type="binding site" evidence="1">
    <location>
        <position position="338"/>
    </location>
    <ligand>
        <name>Mg(2+)</name>
        <dbReference type="ChEBI" id="CHEBI:18420"/>
        <label>1</label>
    </ligand>
</feature>
<dbReference type="EC" id="5.3.1.5"/>
<dbReference type="EMBL" id="D00756">
    <property type="protein sequence ID" value="BAA00652.1"/>
    <property type="molecule type" value="Genomic_DNA"/>
</dbReference>
<dbReference type="EMBL" id="AF001974">
    <property type="protein sequence ID" value="AAC46145.1"/>
    <property type="status" value="ALT_INIT"/>
    <property type="molecule type" value="Genomic_DNA"/>
</dbReference>
<dbReference type="EMBL" id="CP000924">
    <property type="protein sequence ID" value="ABY95684.1"/>
    <property type="status" value="ALT_INIT"/>
    <property type="molecule type" value="Genomic_DNA"/>
</dbReference>
<dbReference type="RefSeq" id="WP_013570854.1">
    <property type="nucleotide sequence ID" value="NC_010321.1"/>
</dbReference>
<dbReference type="SMR" id="P22842"/>
<dbReference type="STRING" id="340099.Teth39_2060"/>
<dbReference type="KEGG" id="tpd:Teth39_2060"/>
<dbReference type="eggNOG" id="COG2115">
    <property type="taxonomic scope" value="Bacteria"/>
</dbReference>
<dbReference type="HOGENOM" id="CLU_037261_1_0_9"/>
<dbReference type="Proteomes" id="UP000002156">
    <property type="component" value="Chromosome"/>
</dbReference>
<dbReference type="GO" id="GO:0005737">
    <property type="term" value="C:cytoplasm"/>
    <property type="evidence" value="ECO:0007669"/>
    <property type="project" value="UniProtKB-SubCell"/>
</dbReference>
<dbReference type="GO" id="GO:0000287">
    <property type="term" value="F:magnesium ion binding"/>
    <property type="evidence" value="ECO:0007669"/>
    <property type="project" value="UniProtKB-UniRule"/>
</dbReference>
<dbReference type="GO" id="GO:0009045">
    <property type="term" value="F:xylose isomerase activity"/>
    <property type="evidence" value="ECO:0007669"/>
    <property type="project" value="UniProtKB-UniRule"/>
</dbReference>
<dbReference type="GO" id="GO:0042732">
    <property type="term" value="P:D-xylose metabolic process"/>
    <property type="evidence" value="ECO:0007669"/>
    <property type="project" value="UniProtKB-UniRule"/>
</dbReference>
<dbReference type="FunFam" id="3.20.20.150:FF:000002">
    <property type="entry name" value="Xylose isomerase"/>
    <property type="match status" value="1"/>
</dbReference>
<dbReference type="Gene3D" id="3.20.20.150">
    <property type="entry name" value="Divalent-metal-dependent TIM barrel enzymes"/>
    <property type="match status" value="1"/>
</dbReference>
<dbReference type="HAMAP" id="MF_00455">
    <property type="entry name" value="Xylose_isom_A"/>
    <property type="match status" value="1"/>
</dbReference>
<dbReference type="InterPro" id="IPR036237">
    <property type="entry name" value="Xyl_isomerase-like_sf"/>
</dbReference>
<dbReference type="InterPro" id="IPR013022">
    <property type="entry name" value="Xyl_isomerase-like_TIM-brl"/>
</dbReference>
<dbReference type="InterPro" id="IPR013452">
    <property type="entry name" value="Xylose_isom_bac"/>
</dbReference>
<dbReference type="InterPro" id="IPR001998">
    <property type="entry name" value="Xylose_isomerase"/>
</dbReference>
<dbReference type="NCBIfam" id="NF003998">
    <property type="entry name" value="PRK05474.1"/>
    <property type="match status" value="1"/>
</dbReference>
<dbReference type="NCBIfam" id="TIGR02630">
    <property type="entry name" value="xylose_isom_A"/>
    <property type="match status" value="1"/>
</dbReference>
<dbReference type="PANTHER" id="PTHR48408">
    <property type="match status" value="1"/>
</dbReference>
<dbReference type="PANTHER" id="PTHR48408:SF1">
    <property type="entry name" value="XYLOSE ISOMERASE"/>
    <property type="match status" value="1"/>
</dbReference>
<dbReference type="Pfam" id="PF01261">
    <property type="entry name" value="AP_endonuc_2"/>
    <property type="match status" value="1"/>
</dbReference>
<dbReference type="PRINTS" id="PR00688">
    <property type="entry name" value="XYLOSISMRASE"/>
</dbReference>
<dbReference type="SUPFAM" id="SSF51658">
    <property type="entry name" value="Xylose isomerase-like"/>
    <property type="match status" value="1"/>
</dbReference>
<dbReference type="PROSITE" id="PS51415">
    <property type="entry name" value="XYLOSE_ISOMERASE"/>
    <property type="match status" value="1"/>
</dbReference>
<sequence>MEYFKNVPQIKYEGPKSNNPYAFKFYNPDEIIDGKPLKEHLRFSVAYWHTFTANGTDPFGAPTMQRPWDHFTDPMDIAKARVEAAFELFEKLDVPFFCFHDRDIAPEGETLRETNKNLDTIVAMIKDYLKTSKTKVLWGTANLFSNPRFVHGAATSCNADVFAYAAAQVKKALEITKELGGQNYVFWGGREGYETLLNTDMELELDNLARFLHMAVEYAQEIGFEGQFLIEPKPKEPTKHQYDFDAASVHAFLKKYDLDKYFKLNIEANHATLAGHDFQHELRYARINNMLGSIDANMGDMLLGWDTDQYPTDIRMTTLAMYEVIKMGGFNKGGLNFDAKVRRASFEPEDLFLGHIAGMDAFAKGFKVAYKLVKDGVFDRFIEERYKSYREGIGAEIVSGKANFKTLEEYALNNPKIENKSGKQELLESILNQYLFSE</sequence>
<protein>
    <recommendedName>
        <fullName>Xylose isomerase</fullName>
        <ecNumber>5.3.1.5</ecNumber>
    </recommendedName>
</protein>
<proteinExistence type="inferred from homology"/>
<comment type="catalytic activity">
    <reaction>
        <text>alpha-D-xylose = alpha-D-xylulofuranose</text>
        <dbReference type="Rhea" id="RHEA:22816"/>
        <dbReference type="ChEBI" id="CHEBI:28518"/>
        <dbReference type="ChEBI" id="CHEBI:188998"/>
        <dbReference type="EC" id="5.3.1.5"/>
    </reaction>
</comment>
<comment type="cofactor">
    <cofactor evidence="1">
        <name>Mg(2+)</name>
        <dbReference type="ChEBI" id="CHEBI:18420"/>
    </cofactor>
    <text evidence="1">Binds 2 magnesium ions per subunit.</text>
</comment>
<comment type="subunit">
    <text>Homotetramer.</text>
</comment>
<comment type="subcellular location">
    <subcellularLocation>
        <location>Cytoplasm</location>
    </subcellularLocation>
</comment>
<comment type="similarity">
    <text evidence="2">Belongs to the xylose isomerase family.</text>
</comment>
<comment type="sequence caution" evidence="2">
    <conflict type="erroneous initiation">
        <sequence resource="EMBL-CDS" id="AAC46145"/>
    </conflict>
</comment>
<comment type="sequence caution" evidence="2">
    <conflict type="erroneous initiation">
        <sequence resource="EMBL-CDS" id="ABY95684"/>
    </conflict>
</comment>
<keyword id="KW-0119">Carbohydrate metabolism</keyword>
<keyword id="KW-0963">Cytoplasm</keyword>
<keyword id="KW-0413">Isomerase</keyword>
<keyword id="KW-0460">Magnesium</keyword>
<keyword id="KW-0479">Metal-binding</keyword>
<keyword id="KW-1185">Reference proteome</keyword>
<keyword id="KW-0859">Xylose metabolism</keyword>
<evidence type="ECO:0000250" key="1"/>
<evidence type="ECO:0000305" key="2"/>
<accession>P22842</accession>
<accession>B0K7B8</accession>